<dbReference type="EMBL" id="AB026720">
    <property type="protein sequence ID" value="BAB17622.1"/>
    <property type="molecule type" value="mRNA"/>
</dbReference>
<dbReference type="EMBL" id="AB026721">
    <property type="protein sequence ID" value="BAB17623.1"/>
    <property type="molecule type" value="Genomic_DNA"/>
</dbReference>
<dbReference type="GO" id="GO:0005576">
    <property type="term" value="C:extracellular region"/>
    <property type="evidence" value="ECO:0007669"/>
    <property type="project" value="UniProtKB-KW"/>
</dbReference>
<dbReference type="GO" id="GO:0009277">
    <property type="term" value="C:fungal-type cell wall"/>
    <property type="evidence" value="ECO:0007669"/>
    <property type="project" value="InterPro"/>
</dbReference>
<dbReference type="GO" id="GO:0005199">
    <property type="term" value="F:structural constituent of cell wall"/>
    <property type="evidence" value="ECO:0007669"/>
    <property type="project" value="InterPro"/>
</dbReference>
<dbReference type="CDD" id="cd23507">
    <property type="entry name" value="hydrophobin_I"/>
    <property type="match status" value="1"/>
</dbReference>
<dbReference type="InterPro" id="IPR001338">
    <property type="entry name" value="Hydrophobin"/>
</dbReference>
<dbReference type="Pfam" id="PF01185">
    <property type="entry name" value="Hydrophobin"/>
    <property type="match status" value="1"/>
</dbReference>
<dbReference type="SMART" id="SM00075">
    <property type="entry name" value="HYDRO"/>
    <property type="match status" value="1"/>
</dbReference>
<accession>Q9HDD5</accession>
<sequence>MVSFRAFTVAASLFATLAAATPLDTALPRAADQCNVSNQQCCNSVQQASSGPAALILGLLGVVLQDVNVLVGLDCSPITVIGGGNGGCNASPVCCENNSFGSLISIGCVPISI</sequence>
<feature type="signal peptide" evidence="2">
    <location>
        <begin position="1"/>
        <end position="20"/>
    </location>
</feature>
<feature type="chain" id="PRO_5013983883" description="Class I hydrophobin fvh1">
    <location>
        <begin position="21"/>
        <end position="113"/>
    </location>
</feature>
<feature type="glycosylation site" description="N-linked (GlcNAc...) asparagine" evidence="3">
    <location>
        <position position="35"/>
    </location>
</feature>
<feature type="glycosylation site" description="N-linked (GlcNAc...) asparagine" evidence="3">
    <location>
        <position position="97"/>
    </location>
</feature>
<feature type="disulfide bond" evidence="1">
    <location>
        <begin position="34"/>
        <end position="94"/>
    </location>
</feature>
<feature type="disulfide bond" evidence="1">
    <location>
        <begin position="41"/>
        <end position="88"/>
    </location>
</feature>
<feature type="disulfide bond" evidence="1">
    <location>
        <begin position="42"/>
        <end position="75"/>
    </location>
</feature>
<feature type="disulfide bond" evidence="1">
    <location>
        <begin position="95"/>
        <end position="108"/>
    </location>
</feature>
<protein>
    <recommendedName>
        <fullName evidence="5">Class I hydrophobin fvh1</fullName>
    </recommendedName>
</protein>
<gene>
    <name evidence="5" type="primary">fvh1</name>
</gene>
<evidence type="ECO:0000250" key="1">
    <source>
        <dbReference type="UniProtKB" id="Q04571"/>
    </source>
</evidence>
<evidence type="ECO:0000255" key="2"/>
<evidence type="ECO:0000255" key="3">
    <source>
        <dbReference type="PROSITE-ProRule" id="PRU00498"/>
    </source>
</evidence>
<evidence type="ECO:0000269" key="4">
    <source>
    </source>
</evidence>
<evidence type="ECO:0000303" key="5">
    <source>
    </source>
</evidence>
<evidence type="ECO:0000305" key="6"/>
<keyword id="KW-0134">Cell wall</keyword>
<keyword id="KW-1015">Disulfide bond</keyword>
<keyword id="KW-0325">Glycoprotein</keyword>
<keyword id="KW-0964">Secreted</keyword>
<keyword id="KW-0732">Signal</keyword>
<name>FVH1_FLAVE</name>
<proteinExistence type="evidence at transcript level"/>
<organism>
    <name type="scientific">Flammulina velutipes</name>
    <name type="common">Agaricus velutipes</name>
    <dbReference type="NCBI Taxonomy" id="38945"/>
    <lineage>
        <taxon>Eukaryota</taxon>
        <taxon>Fungi</taxon>
        <taxon>Dikarya</taxon>
        <taxon>Basidiomycota</taxon>
        <taxon>Agaricomycotina</taxon>
        <taxon>Agaricomycetes</taxon>
        <taxon>Agaricomycetidae</taxon>
        <taxon>Agaricales</taxon>
        <taxon>Marasmiineae</taxon>
        <taxon>Physalacriaceae</taxon>
        <taxon>Flammulina</taxon>
    </lineage>
</organism>
<reference key="1">
    <citation type="journal article" date="2001" name="Curr. Genet.">
        <title>A gene encoding a hydrophobin, fvh1, is specifically expressed after the induction of fruiting in the edible mushroom Flammulina velutipes.</title>
        <authorList>
            <person name="Ando A."/>
            <person name="Harada A."/>
            <person name="Miura K."/>
            <person name="Tamai Y."/>
        </authorList>
    </citation>
    <scope>NUCLEOTIDE SEQUENCE [GENOMIC DNA / MRNA]</scope>
    <scope>DEVELOPMENTAL STAGE</scope>
    <scope>FUNCTION</scope>
    <source>
        <strain>Fv-4</strain>
    </source>
</reference>
<comment type="function">
    <text evidence="4 6">Aerial growth, conidiation, and dispersal of filamentous fungi in the environment rely upon a capability of their secreting small amphipathic proteins called hydrophobins (HPBs) with low sequence identity. Class I can self-assemble into an outermost layer of rodlet bundles on aerial cell surfaces, conferring cellular hydrophobicity that supports fungal growth, development and dispersal; whereas Class II form highly ordered films at water-air interfaces through intermolecular interactions but contribute nothing to the rodlet structure (Probable). Fvh1 is a class I hydrophobin involved in fruiting body initiation (PubMed:11409181).</text>
</comment>
<comment type="subunit">
    <text evidence="1">Self-assembles to form functional amyloid fibrils called rodlets. Self-assembly into fibrillar rodlets occurs spontaneously at hydrophobic:hydrophilic interfaces and the rodlets further associate laterally to form amphipathic monolayers.</text>
</comment>
<comment type="subcellular location">
    <subcellularLocation>
        <location evidence="1">Secreted</location>
    </subcellularLocation>
    <subcellularLocation>
        <location evidence="1">Secreted</location>
        <location evidence="1">Cell wall</location>
    </subcellularLocation>
</comment>
<comment type="developmental stage">
    <text evidence="4">Specifically and abundantly expressed in mycelia after the induction of fruiting and during fruit body initiation (PubMed:11409181). Not expressed in mycelia before the induction of fruiting or in mature fruit bodies (PubMed:11409181).</text>
</comment>
<comment type="similarity">
    <text evidence="6">Belongs to the fungal hydrophobin family.</text>
</comment>